<keyword id="KW-0488">Methylation</keyword>
<keyword id="KW-0687">Ribonucleoprotein</keyword>
<keyword id="KW-0689">Ribosomal protein</keyword>
<keyword id="KW-0694">RNA-binding</keyword>
<keyword id="KW-0699">rRNA-binding</keyword>
<evidence type="ECO:0000255" key="1">
    <source>
        <dbReference type="HAMAP-Rule" id="MF_00736"/>
    </source>
</evidence>
<evidence type="ECO:0000305" key="2"/>
<name>RL11_PROMP</name>
<feature type="chain" id="PRO_0000104341" description="Large ribosomal subunit protein uL11">
    <location>
        <begin position="1"/>
        <end position="141"/>
    </location>
</feature>
<sequence>MAKKIVAVIKLALQAGKANPAPPVGPALGQHGVNIMAFCKEYNARTQDKAGFVIPVEISVFEDRSFTFITKTPPASVLITKAAGIEKGAGESSKGSVGNISKSQLEEIAKTKLPDLNCTSIESAMKVIEGTARNMGVSITE</sequence>
<proteinExistence type="inferred from homology"/>
<reference key="1">
    <citation type="journal article" date="2003" name="Nature">
        <title>Genome divergence in two Prochlorococcus ecotypes reflects oceanic niche differentiation.</title>
        <authorList>
            <person name="Rocap G."/>
            <person name="Larimer F.W."/>
            <person name="Lamerdin J.E."/>
            <person name="Malfatti S."/>
            <person name="Chain P."/>
            <person name="Ahlgren N.A."/>
            <person name="Arellano A."/>
            <person name="Coleman M."/>
            <person name="Hauser L."/>
            <person name="Hess W.R."/>
            <person name="Johnson Z.I."/>
            <person name="Land M.L."/>
            <person name="Lindell D."/>
            <person name="Post A.F."/>
            <person name="Regala W."/>
            <person name="Shah M."/>
            <person name="Shaw S.L."/>
            <person name="Steglich C."/>
            <person name="Sullivan M.B."/>
            <person name="Ting C.S."/>
            <person name="Tolonen A."/>
            <person name="Webb E.A."/>
            <person name="Zinser E.R."/>
            <person name="Chisholm S.W."/>
        </authorList>
    </citation>
    <scope>NUCLEOTIDE SEQUENCE [LARGE SCALE GENOMIC DNA]</scope>
    <source>
        <strain>CCMP1986 / NIES-2087 / MED4</strain>
    </source>
</reference>
<accession>Q7V381</accession>
<comment type="function">
    <text evidence="1">Forms part of the ribosomal stalk which helps the ribosome interact with GTP-bound translation factors.</text>
</comment>
<comment type="subunit">
    <text evidence="1">Part of the ribosomal stalk of the 50S ribosomal subunit. Interacts with L10 and the large rRNA to form the base of the stalk. L10 forms an elongated spine to which L12 dimers bind in a sequential fashion forming a multimeric L10(L12)X complex.</text>
</comment>
<comment type="PTM">
    <text evidence="1">One or more lysine residues are methylated.</text>
</comment>
<comment type="similarity">
    <text evidence="1">Belongs to the universal ribosomal protein uL11 family.</text>
</comment>
<dbReference type="EMBL" id="BX548174">
    <property type="protein sequence ID" value="CAE18663.1"/>
    <property type="molecule type" value="Genomic_DNA"/>
</dbReference>
<dbReference type="RefSeq" id="WP_011131843.1">
    <property type="nucleotide sequence ID" value="NC_005072.1"/>
</dbReference>
<dbReference type="SMR" id="Q7V381"/>
<dbReference type="STRING" id="59919.PMM0204"/>
<dbReference type="KEGG" id="pmm:PMM0204"/>
<dbReference type="eggNOG" id="COG0080">
    <property type="taxonomic scope" value="Bacteria"/>
</dbReference>
<dbReference type="HOGENOM" id="CLU_074237_2_1_3"/>
<dbReference type="OrthoDB" id="9802408at2"/>
<dbReference type="Proteomes" id="UP000001026">
    <property type="component" value="Chromosome"/>
</dbReference>
<dbReference type="GO" id="GO:0022625">
    <property type="term" value="C:cytosolic large ribosomal subunit"/>
    <property type="evidence" value="ECO:0007669"/>
    <property type="project" value="TreeGrafter"/>
</dbReference>
<dbReference type="GO" id="GO:0070180">
    <property type="term" value="F:large ribosomal subunit rRNA binding"/>
    <property type="evidence" value="ECO:0007669"/>
    <property type="project" value="UniProtKB-UniRule"/>
</dbReference>
<dbReference type="GO" id="GO:0003735">
    <property type="term" value="F:structural constituent of ribosome"/>
    <property type="evidence" value="ECO:0007669"/>
    <property type="project" value="InterPro"/>
</dbReference>
<dbReference type="GO" id="GO:0006412">
    <property type="term" value="P:translation"/>
    <property type="evidence" value="ECO:0007669"/>
    <property type="project" value="UniProtKB-UniRule"/>
</dbReference>
<dbReference type="CDD" id="cd00349">
    <property type="entry name" value="Ribosomal_L11"/>
    <property type="match status" value="1"/>
</dbReference>
<dbReference type="FunFam" id="1.10.10.250:FF:000001">
    <property type="entry name" value="50S ribosomal protein L11"/>
    <property type="match status" value="1"/>
</dbReference>
<dbReference type="FunFam" id="3.30.1550.10:FF:000001">
    <property type="entry name" value="50S ribosomal protein L11"/>
    <property type="match status" value="1"/>
</dbReference>
<dbReference type="Gene3D" id="1.10.10.250">
    <property type="entry name" value="Ribosomal protein L11, C-terminal domain"/>
    <property type="match status" value="1"/>
</dbReference>
<dbReference type="Gene3D" id="3.30.1550.10">
    <property type="entry name" value="Ribosomal protein L11/L12, N-terminal domain"/>
    <property type="match status" value="1"/>
</dbReference>
<dbReference type="HAMAP" id="MF_00736">
    <property type="entry name" value="Ribosomal_uL11"/>
    <property type="match status" value="1"/>
</dbReference>
<dbReference type="InterPro" id="IPR000911">
    <property type="entry name" value="Ribosomal_uL11"/>
</dbReference>
<dbReference type="InterPro" id="IPR006519">
    <property type="entry name" value="Ribosomal_uL11_bac-typ"/>
</dbReference>
<dbReference type="InterPro" id="IPR020783">
    <property type="entry name" value="Ribosomal_uL11_C"/>
</dbReference>
<dbReference type="InterPro" id="IPR036769">
    <property type="entry name" value="Ribosomal_uL11_C_sf"/>
</dbReference>
<dbReference type="InterPro" id="IPR020785">
    <property type="entry name" value="Ribosomal_uL11_CS"/>
</dbReference>
<dbReference type="InterPro" id="IPR020784">
    <property type="entry name" value="Ribosomal_uL11_N"/>
</dbReference>
<dbReference type="InterPro" id="IPR036796">
    <property type="entry name" value="Ribosomal_uL11_N_sf"/>
</dbReference>
<dbReference type="NCBIfam" id="TIGR01632">
    <property type="entry name" value="L11_bact"/>
    <property type="match status" value="1"/>
</dbReference>
<dbReference type="PANTHER" id="PTHR11661">
    <property type="entry name" value="60S RIBOSOMAL PROTEIN L12"/>
    <property type="match status" value="1"/>
</dbReference>
<dbReference type="PANTHER" id="PTHR11661:SF1">
    <property type="entry name" value="LARGE RIBOSOMAL SUBUNIT PROTEIN UL11M"/>
    <property type="match status" value="1"/>
</dbReference>
<dbReference type="Pfam" id="PF00298">
    <property type="entry name" value="Ribosomal_L11"/>
    <property type="match status" value="1"/>
</dbReference>
<dbReference type="Pfam" id="PF03946">
    <property type="entry name" value="Ribosomal_L11_N"/>
    <property type="match status" value="1"/>
</dbReference>
<dbReference type="SMART" id="SM00649">
    <property type="entry name" value="RL11"/>
    <property type="match status" value="1"/>
</dbReference>
<dbReference type="SUPFAM" id="SSF54747">
    <property type="entry name" value="Ribosomal L11/L12e N-terminal domain"/>
    <property type="match status" value="1"/>
</dbReference>
<dbReference type="SUPFAM" id="SSF46906">
    <property type="entry name" value="Ribosomal protein L11, C-terminal domain"/>
    <property type="match status" value="1"/>
</dbReference>
<dbReference type="PROSITE" id="PS00359">
    <property type="entry name" value="RIBOSOMAL_L11"/>
    <property type="match status" value="1"/>
</dbReference>
<gene>
    <name evidence="1" type="primary">rplK</name>
    <name evidence="1" type="synonym">rpl11</name>
    <name type="ordered locus">PMM0204</name>
</gene>
<protein>
    <recommendedName>
        <fullName evidence="1">Large ribosomal subunit protein uL11</fullName>
    </recommendedName>
    <alternativeName>
        <fullName evidence="2">50S ribosomal protein L11</fullName>
    </alternativeName>
</protein>
<organism>
    <name type="scientific">Prochlorococcus marinus subsp. pastoris (strain CCMP1986 / NIES-2087 / MED4)</name>
    <dbReference type="NCBI Taxonomy" id="59919"/>
    <lineage>
        <taxon>Bacteria</taxon>
        <taxon>Bacillati</taxon>
        <taxon>Cyanobacteriota</taxon>
        <taxon>Cyanophyceae</taxon>
        <taxon>Synechococcales</taxon>
        <taxon>Prochlorococcaceae</taxon>
        <taxon>Prochlorococcus</taxon>
    </lineage>
</organism>